<accession>Q5E399</accession>
<reference key="1">
    <citation type="journal article" date="2005" name="Proc. Natl. Acad. Sci. U.S.A.">
        <title>Complete genome sequence of Vibrio fischeri: a symbiotic bacterium with pathogenic congeners.</title>
        <authorList>
            <person name="Ruby E.G."/>
            <person name="Urbanowski M."/>
            <person name="Campbell J."/>
            <person name="Dunn A."/>
            <person name="Faini M."/>
            <person name="Gunsalus R."/>
            <person name="Lostroh P."/>
            <person name="Lupp C."/>
            <person name="McCann J."/>
            <person name="Millikan D."/>
            <person name="Schaefer A."/>
            <person name="Stabb E."/>
            <person name="Stevens A."/>
            <person name="Visick K."/>
            <person name="Whistler C."/>
            <person name="Greenberg E.P."/>
        </authorList>
    </citation>
    <scope>NUCLEOTIDE SEQUENCE [LARGE SCALE GENOMIC DNA]</scope>
    <source>
        <strain>ATCC 700601 / ES114</strain>
    </source>
</reference>
<gene>
    <name evidence="1" type="primary">smpB</name>
    <name type="ordered locus">VF_2002</name>
</gene>
<proteinExistence type="inferred from homology"/>
<dbReference type="EMBL" id="CP000020">
    <property type="protein sequence ID" value="AAW86497.1"/>
    <property type="molecule type" value="Genomic_DNA"/>
</dbReference>
<dbReference type="RefSeq" id="WP_011262462.1">
    <property type="nucleotide sequence ID" value="NC_006840.2"/>
</dbReference>
<dbReference type="RefSeq" id="YP_205385.1">
    <property type="nucleotide sequence ID" value="NC_006840.2"/>
</dbReference>
<dbReference type="SMR" id="Q5E399"/>
<dbReference type="STRING" id="312309.VF_2002"/>
<dbReference type="EnsemblBacteria" id="AAW86497">
    <property type="protein sequence ID" value="AAW86497"/>
    <property type="gene ID" value="VF_2002"/>
</dbReference>
<dbReference type="GeneID" id="54164698"/>
<dbReference type="KEGG" id="vfi:VF_2002"/>
<dbReference type="PATRIC" id="fig|312309.11.peg.2029"/>
<dbReference type="eggNOG" id="COG0691">
    <property type="taxonomic scope" value="Bacteria"/>
</dbReference>
<dbReference type="HOGENOM" id="CLU_108953_3_0_6"/>
<dbReference type="OrthoDB" id="9805462at2"/>
<dbReference type="Proteomes" id="UP000000537">
    <property type="component" value="Chromosome I"/>
</dbReference>
<dbReference type="GO" id="GO:0005829">
    <property type="term" value="C:cytosol"/>
    <property type="evidence" value="ECO:0007669"/>
    <property type="project" value="TreeGrafter"/>
</dbReference>
<dbReference type="GO" id="GO:0003723">
    <property type="term" value="F:RNA binding"/>
    <property type="evidence" value="ECO:0007669"/>
    <property type="project" value="UniProtKB-UniRule"/>
</dbReference>
<dbReference type="GO" id="GO:0070929">
    <property type="term" value="P:trans-translation"/>
    <property type="evidence" value="ECO:0007669"/>
    <property type="project" value="UniProtKB-UniRule"/>
</dbReference>
<dbReference type="CDD" id="cd09294">
    <property type="entry name" value="SmpB"/>
    <property type="match status" value="1"/>
</dbReference>
<dbReference type="Gene3D" id="2.40.280.10">
    <property type="match status" value="1"/>
</dbReference>
<dbReference type="HAMAP" id="MF_00023">
    <property type="entry name" value="SmpB"/>
    <property type="match status" value="1"/>
</dbReference>
<dbReference type="InterPro" id="IPR023620">
    <property type="entry name" value="SmpB"/>
</dbReference>
<dbReference type="InterPro" id="IPR000037">
    <property type="entry name" value="SsrA-bd_prot"/>
</dbReference>
<dbReference type="InterPro" id="IPR020081">
    <property type="entry name" value="SsrA-bd_prot_CS"/>
</dbReference>
<dbReference type="NCBIfam" id="NF003843">
    <property type="entry name" value="PRK05422.1"/>
    <property type="match status" value="1"/>
</dbReference>
<dbReference type="NCBIfam" id="TIGR00086">
    <property type="entry name" value="smpB"/>
    <property type="match status" value="1"/>
</dbReference>
<dbReference type="PANTHER" id="PTHR30308:SF2">
    <property type="entry name" value="SSRA-BINDING PROTEIN"/>
    <property type="match status" value="1"/>
</dbReference>
<dbReference type="PANTHER" id="PTHR30308">
    <property type="entry name" value="TMRNA-BINDING COMPONENT OF TRANS-TRANSLATION TAGGING COMPLEX"/>
    <property type="match status" value="1"/>
</dbReference>
<dbReference type="Pfam" id="PF01668">
    <property type="entry name" value="SmpB"/>
    <property type="match status" value="1"/>
</dbReference>
<dbReference type="SUPFAM" id="SSF74982">
    <property type="entry name" value="Small protein B (SmpB)"/>
    <property type="match status" value="1"/>
</dbReference>
<dbReference type="PROSITE" id="PS01317">
    <property type="entry name" value="SSRP"/>
    <property type="match status" value="1"/>
</dbReference>
<comment type="function">
    <text evidence="1">Required for rescue of stalled ribosomes mediated by trans-translation. Binds to transfer-messenger RNA (tmRNA), required for stable association of tmRNA with ribosomes. tmRNA and SmpB together mimic tRNA shape, replacing the anticodon stem-loop with SmpB. tmRNA is encoded by the ssrA gene; the 2 termini fold to resemble tRNA(Ala) and it encodes a 'tag peptide', a short internal open reading frame. During trans-translation Ala-aminoacylated tmRNA acts like a tRNA, entering the A-site of stalled ribosomes, displacing the stalled mRNA. The ribosome then switches to translate the ORF on the tmRNA; the nascent peptide is terminated with the 'tag peptide' encoded by the tmRNA and targeted for degradation. The ribosome is freed to recommence translation, which seems to be the essential function of trans-translation.</text>
</comment>
<comment type="subcellular location">
    <subcellularLocation>
        <location evidence="1">Cytoplasm</location>
    </subcellularLocation>
    <text evidence="1">The tmRNA-SmpB complex associates with stalled 70S ribosomes.</text>
</comment>
<comment type="similarity">
    <text evidence="1">Belongs to the SmpB family.</text>
</comment>
<evidence type="ECO:0000255" key="1">
    <source>
        <dbReference type="HAMAP-Rule" id="MF_00023"/>
    </source>
</evidence>
<evidence type="ECO:0000256" key="2">
    <source>
        <dbReference type="SAM" id="MobiDB-lite"/>
    </source>
</evidence>
<keyword id="KW-0963">Cytoplasm</keyword>
<keyword id="KW-1185">Reference proteome</keyword>
<keyword id="KW-0694">RNA-binding</keyword>
<sequence>MAKKKSKDKAGSNTIAMNKQARHEYFIDDEIEAGIELQGWEVKSLRSGKVNIAESYVYVRDGEIFISGMTITPLQAASTHVIANPTRIRKLLMSRKEIDNLIGRVNREGMTLVATTMYWVRSWAKIKVGVAKGKKLHDKRTDSKEKDWNRDKARIMKSSLR</sequence>
<name>SSRP_ALIF1</name>
<feature type="chain" id="PRO_0000103064" description="SsrA-binding protein">
    <location>
        <begin position="1"/>
        <end position="161"/>
    </location>
</feature>
<feature type="region of interest" description="Disordered" evidence="2">
    <location>
        <begin position="138"/>
        <end position="161"/>
    </location>
</feature>
<feature type="compositionally biased region" description="Basic and acidic residues" evidence="2">
    <location>
        <begin position="139"/>
        <end position="154"/>
    </location>
</feature>
<organism>
    <name type="scientific">Aliivibrio fischeri (strain ATCC 700601 / ES114)</name>
    <name type="common">Vibrio fischeri</name>
    <dbReference type="NCBI Taxonomy" id="312309"/>
    <lineage>
        <taxon>Bacteria</taxon>
        <taxon>Pseudomonadati</taxon>
        <taxon>Pseudomonadota</taxon>
        <taxon>Gammaproteobacteria</taxon>
        <taxon>Vibrionales</taxon>
        <taxon>Vibrionaceae</taxon>
        <taxon>Aliivibrio</taxon>
    </lineage>
</organism>
<protein>
    <recommendedName>
        <fullName evidence="1">SsrA-binding protein</fullName>
    </recommendedName>
    <alternativeName>
        <fullName evidence="1">Small protein B</fullName>
    </alternativeName>
</protein>